<feature type="chain" id="PRO_0000431481" description="Ribosomal RNA small subunit methyltransferase F">
    <location>
        <begin position="1"/>
        <end position="456"/>
    </location>
</feature>
<feature type="active site" description="Nucleophile" evidence="2">
    <location>
        <position position="230"/>
    </location>
</feature>
<feature type="binding site" evidence="3">
    <location>
        <begin position="109"/>
        <end position="115"/>
    </location>
    <ligand>
        <name>S-adenosyl-L-methionine</name>
        <dbReference type="ChEBI" id="CHEBI:59789"/>
    </ligand>
</feature>
<feature type="binding site" evidence="3">
    <location>
        <position position="133"/>
    </location>
    <ligand>
        <name>S-adenosyl-L-methionine</name>
        <dbReference type="ChEBI" id="CHEBI:59789"/>
    </ligand>
</feature>
<feature type="binding site" evidence="3">
    <location>
        <position position="138"/>
    </location>
    <ligand>
        <name>S-adenosyl-L-methionine</name>
        <dbReference type="ChEBI" id="CHEBI:59789"/>
    </ligand>
</feature>
<feature type="binding site" evidence="3">
    <location>
        <position position="177"/>
    </location>
    <ligand>
        <name>S-adenosyl-L-methionine</name>
        <dbReference type="ChEBI" id="CHEBI:59789"/>
    </ligand>
</feature>
<feature type="helix" evidence="7">
    <location>
        <begin position="4"/>
        <end position="14"/>
    </location>
</feature>
<feature type="helix" evidence="7">
    <location>
        <begin position="15"/>
        <end position="17"/>
    </location>
</feature>
<feature type="helix" evidence="7">
    <location>
        <begin position="18"/>
        <end position="26"/>
    </location>
</feature>
<feature type="strand" evidence="7">
    <location>
        <begin position="33"/>
        <end position="36"/>
    </location>
</feature>
<feature type="turn" evidence="7">
    <location>
        <begin position="38"/>
        <end position="40"/>
    </location>
</feature>
<feature type="helix" evidence="7">
    <location>
        <begin position="43"/>
        <end position="49"/>
    </location>
</feature>
<feature type="strand" evidence="7">
    <location>
        <begin position="55"/>
        <end position="57"/>
    </location>
</feature>
<feature type="strand" evidence="7">
    <location>
        <begin position="60"/>
        <end position="65"/>
    </location>
</feature>
<feature type="strand" evidence="7">
    <location>
        <begin position="73"/>
        <end position="75"/>
    </location>
</feature>
<feature type="helix" evidence="7">
    <location>
        <begin position="76"/>
        <end position="79"/>
    </location>
</feature>
<feature type="strand" evidence="7">
    <location>
        <begin position="82"/>
        <end position="85"/>
    </location>
</feature>
<feature type="helix" evidence="7">
    <location>
        <begin position="89"/>
        <end position="91"/>
    </location>
</feature>
<feature type="helix" evidence="7">
    <location>
        <begin position="92"/>
        <end position="97"/>
    </location>
</feature>
<feature type="strand" evidence="7">
    <location>
        <begin position="104"/>
        <end position="109"/>
    </location>
</feature>
<feature type="helix" evidence="7">
    <location>
        <begin position="114"/>
        <end position="122"/>
    </location>
</feature>
<feature type="turn" evidence="7">
    <location>
        <begin position="123"/>
        <end position="125"/>
    </location>
</feature>
<feature type="strand" evidence="7">
    <location>
        <begin position="127"/>
        <end position="132"/>
    </location>
</feature>
<feature type="helix" evidence="7">
    <location>
        <begin position="136"/>
        <end position="149"/>
    </location>
</feature>
<feature type="strand" evidence="7">
    <location>
        <begin position="154"/>
        <end position="156"/>
    </location>
</feature>
<feature type="helix" evidence="7">
    <location>
        <begin position="160"/>
        <end position="167"/>
    </location>
</feature>
<feature type="strand" evidence="7">
    <location>
        <begin position="171"/>
        <end position="177"/>
    </location>
</feature>
<feature type="helix" evidence="7">
    <location>
        <begin position="183"/>
        <end position="185"/>
    </location>
</feature>
<feature type="turn" evidence="7">
    <location>
        <begin position="186"/>
        <end position="188"/>
    </location>
</feature>
<feature type="helix" evidence="7">
    <location>
        <begin position="193"/>
        <end position="195"/>
    </location>
</feature>
<feature type="helix" evidence="7">
    <location>
        <begin position="200"/>
        <end position="216"/>
    </location>
</feature>
<feature type="strand" evidence="7">
    <location>
        <begin position="219"/>
        <end position="230"/>
    </location>
</feature>
<feature type="helix" evidence="7">
    <location>
        <begin position="234"/>
        <end position="236"/>
    </location>
</feature>
<feature type="helix" evidence="7">
    <location>
        <begin position="238"/>
        <end position="247"/>
    </location>
</feature>
<feature type="strand" evidence="7">
    <location>
        <begin position="251"/>
        <end position="254"/>
    </location>
</feature>
<feature type="strand" evidence="7">
    <location>
        <begin position="262"/>
        <end position="264"/>
    </location>
</feature>
<feature type="helix" evidence="7">
    <location>
        <begin position="267"/>
        <end position="269"/>
    </location>
</feature>
<feature type="turn" evidence="7">
    <location>
        <begin position="270"/>
        <end position="272"/>
    </location>
</feature>
<feature type="helix" evidence="7">
    <location>
        <begin position="274"/>
        <end position="278"/>
    </location>
</feature>
<feature type="strand" evidence="7">
    <location>
        <begin position="279"/>
        <end position="282"/>
    </location>
</feature>
<feature type="turn" evidence="7">
    <location>
        <begin position="284"/>
        <end position="286"/>
    </location>
</feature>
<feature type="strand" evidence="7">
    <location>
        <begin position="287"/>
        <end position="290"/>
    </location>
</feature>
<feature type="strand" evidence="7">
    <location>
        <begin position="292"/>
        <end position="299"/>
    </location>
</feature>
<feature type="helix" evidence="7">
    <location>
        <begin position="317"/>
        <end position="330"/>
    </location>
</feature>
<feature type="strand" evidence="7">
    <location>
        <begin position="338"/>
        <end position="341"/>
    </location>
</feature>
<feature type="strand" evidence="7">
    <location>
        <begin position="344"/>
        <end position="347"/>
    </location>
</feature>
<feature type="strand" evidence="7">
    <location>
        <begin position="361"/>
        <end position="371"/>
    </location>
</feature>
<feature type="strand" evidence="7">
    <location>
        <begin position="374"/>
        <end position="378"/>
    </location>
</feature>
<feature type="helix" evidence="7">
    <location>
        <begin position="379"/>
        <end position="384"/>
    </location>
</feature>
<feature type="turn" evidence="7">
    <location>
        <begin position="386"/>
        <end position="388"/>
    </location>
</feature>
<feature type="strand" evidence="6">
    <location>
        <begin position="393"/>
        <end position="395"/>
    </location>
</feature>
<feature type="strand" evidence="7">
    <location>
        <begin position="397"/>
        <end position="400"/>
    </location>
</feature>
<feature type="helix" evidence="7">
    <location>
        <begin position="405"/>
        <end position="411"/>
    </location>
</feature>
<feature type="strand" evidence="7">
    <location>
        <begin position="423"/>
        <end position="432"/>
    </location>
</feature>
<feature type="strand" evidence="7">
    <location>
        <begin position="435"/>
        <end position="445"/>
    </location>
</feature>
<feature type="strand" evidence="7">
    <location>
        <begin position="448"/>
        <end position="451"/>
    </location>
</feature>
<name>RSMF_THET8</name>
<dbReference type="EC" id="2.1.1.-" evidence="3"/>
<dbReference type="EC" id="2.1.1.178" evidence="3"/>
<dbReference type="EMBL" id="AP008226">
    <property type="protein sequence ID" value="BAD71210.1"/>
    <property type="molecule type" value="Genomic_DNA"/>
</dbReference>
<dbReference type="RefSeq" id="WP_011228642.1">
    <property type="nucleotide sequence ID" value="NC_006461.1"/>
</dbReference>
<dbReference type="RefSeq" id="YP_144653.1">
    <property type="nucleotide sequence ID" value="NC_006461.1"/>
</dbReference>
<dbReference type="PDB" id="3M6U">
    <property type="method" value="X-ray"/>
    <property type="resolution" value="1.40 A"/>
    <property type="chains" value="A/B=1-456"/>
</dbReference>
<dbReference type="PDB" id="3M6V">
    <property type="method" value="X-ray"/>
    <property type="resolution" value="1.82 A"/>
    <property type="chains" value="A/B=1-456"/>
</dbReference>
<dbReference type="PDB" id="3M6W">
    <property type="method" value="X-ray"/>
    <property type="resolution" value="1.30 A"/>
    <property type="chains" value="A=1-456"/>
</dbReference>
<dbReference type="PDB" id="3M6X">
    <property type="method" value="X-ray"/>
    <property type="resolution" value="1.68 A"/>
    <property type="chains" value="A=1-456"/>
</dbReference>
<dbReference type="PDBsum" id="3M6U"/>
<dbReference type="PDBsum" id="3M6V"/>
<dbReference type="PDBsum" id="3M6W"/>
<dbReference type="PDBsum" id="3M6X"/>
<dbReference type="SMR" id="Q5SII2"/>
<dbReference type="DrugBank" id="DB02899">
    <property type="generic name" value="N-Carboxymethionine"/>
</dbReference>
<dbReference type="EnsemblBacteria" id="BAD71210">
    <property type="protein sequence ID" value="BAD71210"/>
    <property type="gene ID" value="BAD71210"/>
</dbReference>
<dbReference type="GeneID" id="3168094"/>
<dbReference type="KEGG" id="ttj:TTHA1387"/>
<dbReference type="PATRIC" id="fig|300852.9.peg.1363"/>
<dbReference type="eggNOG" id="COG0144">
    <property type="taxonomic scope" value="Bacteria"/>
</dbReference>
<dbReference type="eggNOG" id="COG3270">
    <property type="taxonomic scope" value="Bacteria"/>
</dbReference>
<dbReference type="HOGENOM" id="CLU_005316_6_1_0"/>
<dbReference type="PhylomeDB" id="Q5SII2"/>
<dbReference type="EvolutionaryTrace" id="Q5SII2"/>
<dbReference type="Proteomes" id="UP000000532">
    <property type="component" value="Chromosome"/>
</dbReference>
<dbReference type="GO" id="GO:0005737">
    <property type="term" value="C:cytoplasm"/>
    <property type="evidence" value="ECO:0007669"/>
    <property type="project" value="UniProtKB-SubCell"/>
</dbReference>
<dbReference type="GO" id="GO:0003723">
    <property type="term" value="F:RNA binding"/>
    <property type="evidence" value="ECO:0007669"/>
    <property type="project" value="UniProtKB-KW"/>
</dbReference>
<dbReference type="GO" id="GO:0008173">
    <property type="term" value="F:RNA methyltransferase activity"/>
    <property type="evidence" value="ECO:0007669"/>
    <property type="project" value="InterPro"/>
</dbReference>
<dbReference type="GO" id="GO:0001510">
    <property type="term" value="P:RNA methylation"/>
    <property type="evidence" value="ECO:0007669"/>
    <property type="project" value="InterPro"/>
</dbReference>
<dbReference type="GO" id="GO:0006364">
    <property type="term" value="P:rRNA processing"/>
    <property type="evidence" value="ECO:0007669"/>
    <property type="project" value="UniProtKB-KW"/>
</dbReference>
<dbReference type="CDD" id="cd02440">
    <property type="entry name" value="AdoMet_MTases"/>
    <property type="match status" value="1"/>
</dbReference>
<dbReference type="CDD" id="cd21147">
    <property type="entry name" value="RsmF_methylt_CTD1"/>
    <property type="match status" value="1"/>
</dbReference>
<dbReference type="Gene3D" id="2.30.130.60">
    <property type="match status" value="1"/>
</dbReference>
<dbReference type="Gene3D" id="3.30.70.1170">
    <property type="entry name" value="Sun protein, domain 3"/>
    <property type="match status" value="1"/>
</dbReference>
<dbReference type="Gene3D" id="3.40.50.150">
    <property type="entry name" value="Vaccinia Virus protein VP39"/>
    <property type="match status" value="1"/>
</dbReference>
<dbReference type="InterPro" id="IPR031341">
    <property type="entry name" value="Methyltr_RsmF_N"/>
</dbReference>
<dbReference type="InterPro" id="IPR049560">
    <property type="entry name" value="MeTrfase_RsmB-F_NOP2_cat"/>
</dbReference>
<dbReference type="InterPro" id="IPR001678">
    <property type="entry name" value="MeTrfase_RsmB-F_NOP2_dom"/>
</dbReference>
<dbReference type="InterPro" id="IPR023267">
    <property type="entry name" value="RCMT"/>
</dbReference>
<dbReference type="InterPro" id="IPR048151">
    <property type="entry name" value="RsmF"/>
</dbReference>
<dbReference type="InterPro" id="IPR031340">
    <property type="entry name" value="RsmF_methylt_CI"/>
</dbReference>
<dbReference type="InterPro" id="IPR029063">
    <property type="entry name" value="SAM-dependent_MTases_sf"/>
</dbReference>
<dbReference type="NCBIfam" id="NF041567">
    <property type="entry name" value="mtaseRsmF_Thermus"/>
    <property type="match status" value="1"/>
</dbReference>
<dbReference type="PANTHER" id="PTHR22807:SF30">
    <property type="entry name" value="28S RRNA (CYTOSINE(4447)-C(5))-METHYLTRANSFERASE-RELATED"/>
    <property type="match status" value="1"/>
</dbReference>
<dbReference type="PANTHER" id="PTHR22807">
    <property type="entry name" value="NOP2 YEAST -RELATED NOL1/NOP2/FMU SUN DOMAIN-CONTAINING"/>
    <property type="match status" value="1"/>
</dbReference>
<dbReference type="Pfam" id="PF01189">
    <property type="entry name" value="Methyltr_RsmB-F"/>
    <property type="match status" value="1"/>
</dbReference>
<dbReference type="Pfam" id="PF17125">
    <property type="entry name" value="Methyltr_RsmF_N"/>
    <property type="match status" value="1"/>
</dbReference>
<dbReference type="Pfam" id="PF17126">
    <property type="entry name" value="RsmF_methylt_CI"/>
    <property type="match status" value="1"/>
</dbReference>
<dbReference type="PRINTS" id="PR02008">
    <property type="entry name" value="RCMTFAMILY"/>
</dbReference>
<dbReference type="SUPFAM" id="SSF53335">
    <property type="entry name" value="S-adenosyl-L-methionine-dependent methyltransferases"/>
    <property type="match status" value="1"/>
</dbReference>
<dbReference type="PROSITE" id="PS51686">
    <property type="entry name" value="SAM_MT_RSMB_NOP"/>
    <property type="match status" value="1"/>
</dbReference>
<gene>
    <name evidence="4" type="primary">rsmF</name>
    <name evidence="5" type="ordered locus">TTHA1387</name>
</gene>
<proteinExistence type="evidence at protein level"/>
<evidence type="ECO:0000250" key="1">
    <source>
        <dbReference type="UniProtKB" id="P76273"/>
    </source>
</evidence>
<evidence type="ECO:0000255" key="2">
    <source>
        <dbReference type="PROSITE-ProRule" id="PRU01023"/>
    </source>
</evidence>
<evidence type="ECO:0000269" key="3">
    <source>
    </source>
</evidence>
<evidence type="ECO:0000303" key="4">
    <source>
    </source>
</evidence>
<evidence type="ECO:0000312" key="5">
    <source>
        <dbReference type="EMBL" id="BAD71210.1"/>
    </source>
</evidence>
<evidence type="ECO:0007829" key="6">
    <source>
        <dbReference type="PDB" id="3M6U"/>
    </source>
</evidence>
<evidence type="ECO:0007829" key="7">
    <source>
        <dbReference type="PDB" id="3M6W"/>
    </source>
</evidence>
<sequence>MLPKAFLSRMAELLGEEFPAFLKALTEGKRTYGLRVNTLKLPPEAFQRISPWPLRPIPWCQEGFYYPEEARPGPHPFFYAGLYYIQEPSAQAVGVLLDPKPGERVLDLAAAPGGKTTHLAARMGGKGLLLANEVDGKRVRGLLENVERWGAPLAVTQAPPRALAEAFGTYFHRVLLDAPCSGEGMFRKDREAARHWGPSAPKRMAEVQKALLAQASRLLGPGGVLVYSTCTFAPEENEGVVAHFLKAHPEFRLEDARLHPLFAPGVPEWGEGNPELLKTARLWPHRLEGEGHFLARFRKEGGAWSTPRLERPSPLSQEALRAFRGFLEEAGLTLEGPVLDRAGHLYLLPEGLPTLLGLKAPAPGLYLGKVQKGRFLPARALALAFGATLPWPEGLPRLALTPEDPRALAFATGEGVAWEGEDHPLALVVLKTAAGEFPLDFGKAKRGVLRPVGVGL</sequence>
<organism>
    <name type="scientific">Thermus thermophilus (strain ATCC 27634 / DSM 579 / HB8)</name>
    <dbReference type="NCBI Taxonomy" id="300852"/>
    <lineage>
        <taxon>Bacteria</taxon>
        <taxon>Thermotogati</taxon>
        <taxon>Deinococcota</taxon>
        <taxon>Deinococci</taxon>
        <taxon>Thermales</taxon>
        <taxon>Thermaceae</taxon>
        <taxon>Thermus</taxon>
    </lineage>
</organism>
<keyword id="KW-0002">3D-structure</keyword>
<keyword id="KW-0963">Cytoplasm</keyword>
<keyword id="KW-0489">Methyltransferase</keyword>
<keyword id="KW-1185">Reference proteome</keyword>
<keyword id="KW-0694">RNA-binding</keyword>
<keyword id="KW-0698">rRNA processing</keyword>
<keyword id="KW-0949">S-adenosyl-L-methionine</keyword>
<keyword id="KW-0808">Transferase</keyword>
<reference key="1">
    <citation type="submission" date="2004-11" db="EMBL/GenBank/DDBJ databases">
        <title>Complete genome sequence of Thermus thermophilus HB8.</title>
        <authorList>
            <person name="Masui R."/>
            <person name="Kurokawa K."/>
            <person name="Nakagawa N."/>
            <person name="Tokunaga F."/>
            <person name="Koyama Y."/>
            <person name="Shibata T."/>
            <person name="Oshima T."/>
            <person name="Yokoyama S."/>
            <person name="Yasunaga T."/>
            <person name="Kuramitsu S."/>
        </authorList>
    </citation>
    <scope>NUCLEOTIDE SEQUENCE [LARGE SCALE GENOMIC DNA]</scope>
    <source>
        <strain>ATCC 27634 / DSM 579 / HB8</strain>
    </source>
</reference>
<reference key="2">
    <citation type="journal article" date="2010" name="RNA">
        <title>Multi-site-specific 16S rRNA methyltransferase RsmF from Thermus thermophilus.</title>
        <authorList>
            <person name="Demirci H."/>
            <person name="Larsen L.H."/>
            <person name="Hansen T."/>
            <person name="Rasmussen A."/>
            <person name="Cadambi A."/>
            <person name="Gregory S.T."/>
            <person name="Kirpekar F."/>
            <person name="Jogl G."/>
        </authorList>
    </citation>
    <scope>X-RAY CRYSTALLOGRAPHY (1.30 ANGSTROMS) IN COMPLEX WITH S-ADENOSYL-L-METHIONINE</scope>
    <scope>FUNCTION</scope>
    <scope>CATALYTIC ACTIVITY</scope>
    <source>
        <strain>ATCC 27634 / DSM 579 / HB8</strain>
    </source>
</reference>
<comment type="function">
    <text evidence="3">Specifically methylates the cytosines at positions 1400 (m5C1400), 1404 (m5C1404) and 1407 (m5C1407) of 16S rRNA. C1400, C1404 and C1407 are methylated in a 30S subunit substrate, but only C1400 and C1404 are methylated when naked 16S rRNA is the substrate. Methylation by RsmF may facilitate growth at temperatures outside the optimal growth temperature.</text>
</comment>
<comment type="catalytic activity">
    <reaction evidence="3">
        <text>cytidine(1400) in 16S rRNA + S-adenosyl-L-methionine = 5-methylcytidine(1400) in 16S rRNA + S-adenosyl-L-homocysteine + H(+)</text>
        <dbReference type="Rhea" id="RHEA:47732"/>
        <dbReference type="Rhea" id="RHEA-COMP:11892"/>
        <dbReference type="Rhea" id="RHEA-COMP:11893"/>
        <dbReference type="ChEBI" id="CHEBI:15378"/>
        <dbReference type="ChEBI" id="CHEBI:57856"/>
        <dbReference type="ChEBI" id="CHEBI:59789"/>
        <dbReference type="ChEBI" id="CHEBI:74483"/>
        <dbReference type="ChEBI" id="CHEBI:82748"/>
    </reaction>
</comment>
<comment type="catalytic activity">
    <reaction evidence="3">
        <text>cytidine(1404) in 16S rRNA + S-adenosyl-L-methionine = 5-methylcytidine(1404) in 16S rRNA + S-adenosyl-L-homocysteine + H(+)</text>
        <dbReference type="Rhea" id="RHEA:47736"/>
        <dbReference type="Rhea" id="RHEA-COMP:11894"/>
        <dbReference type="Rhea" id="RHEA-COMP:11895"/>
        <dbReference type="ChEBI" id="CHEBI:15378"/>
        <dbReference type="ChEBI" id="CHEBI:57856"/>
        <dbReference type="ChEBI" id="CHEBI:59789"/>
        <dbReference type="ChEBI" id="CHEBI:74483"/>
        <dbReference type="ChEBI" id="CHEBI:82748"/>
    </reaction>
</comment>
<comment type="catalytic activity">
    <reaction evidence="3">
        <text>cytidine(1407) in 16S rRNA + S-adenosyl-L-methionine = 5-methylcytidine(1407) in 16S rRNA + S-adenosyl-L-homocysteine + H(+)</text>
        <dbReference type="Rhea" id="RHEA:42756"/>
        <dbReference type="Rhea" id="RHEA-COMP:10223"/>
        <dbReference type="Rhea" id="RHEA-COMP:10224"/>
        <dbReference type="ChEBI" id="CHEBI:15378"/>
        <dbReference type="ChEBI" id="CHEBI:57856"/>
        <dbReference type="ChEBI" id="CHEBI:59789"/>
        <dbReference type="ChEBI" id="CHEBI:74483"/>
        <dbReference type="ChEBI" id="CHEBI:82748"/>
        <dbReference type="EC" id="2.1.1.178"/>
    </reaction>
</comment>
<comment type="subcellular location">
    <subcellularLocation>
        <location evidence="1">Cytoplasm</location>
    </subcellularLocation>
</comment>
<comment type="similarity">
    <text evidence="2">Belongs to the class I-like SAM-binding methyltransferase superfamily. RsmB/NOP family.</text>
</comment>
<accession>Q5SII2</accession>
<protein>
    <recommendedName>
        <fullName evidence="1">Ribosomal RNA small subunit methyltransferase F</fullName>
        <ecNumber evidence="3">2.1.1.-</ecNumber>
        <ecNumber evidence="3">2.1.1.178</ecNumber>
    </recommendedName>
    <alternativeName>
        <fullName evidence="1">rRNA (cytosine-C(5)-)-methyltransferase RsmF</fullName>
    </alternativeName>
</protein>